<name>ACYP_MYCTO</name>
<protein>
    <recommendedName>
        <fullName>Acylphosphatase</fullName>
        <ecNumber>3.6.1.7</ecNumber>
    </recommendedName>
    <alternativeName>
        <fullName>Acylphosphate phosphohydrolase</fullName>
    </alternativeName>
</protein>
<dbReference type="EC" id="3.6.1.7"/>
<dbReference type="EMBL" id="AE000516">
    <property type="protein sequence ID" value="AAK47318.1"/>
    <property type="molecule type" value="Genomic_DNA"/>
</dbReference>
<dbReference type="RefSeq" id="WP_003414811.1">
    <property type="nucleotide sequence ID" value="NZ_KK341227.1"/>
</dbReference>
<dbReference type="SMR" id="P9WQC8"/>
<dbReference type="KEGG" id="mtc:MT2991"/>
<dbReference type="PATRIC" id="fig|83331.31.peg.3232"/>
<dbReference type="HOGENOM" id="CLU_141932_3_0_11"/>
<dbReference type="Proteomes" id="UP000001020">
    <property type="component" value="Chromosome"/>
</dbReference>
<dbReference type="GO" id="GO:0003998">
    <property type="term" value="F:acylphosphatase activity"/>
    <property type="evidence" value="ECO:0007669"/>
    <property type="project" value="UniProtKB-EC"/>
</dbReference>
<dbReference type="Gene3D" id="3.30.70.100">
    <property type="match status" value="1"/>
</dbReference>
<dbReference type="InterPro" id="IPR020456">
    <property type="entry name" value="Acylphosphatase"/>
</dbReference>
<dbReference type="InterPro" id="IPR001792">
    <property type="entry name" value="Acylphosphatase-like_dom"/>
</dbReference>
<dbReference type="InterPro" id="IPR036046">
    <property type="entry name" value="Acylphosphatase-like_dom_sf"/>
</dbReference>
<dbReference type="InterPro" id="IPR017968">
    <property type="entry name" value="Acylphosphatase_CS"/>
</dbReference>
<dbReference type="NCBIfam" id="NF010997">
    <property type="entry name" value="PRK14422.1"/>
    <property type="match status" value="1"/>
</dbReference>
<dbReference type="PANTHER" id="PTHR47268">
    <property type="entry name" value="ACYLPHOSPHATASE"/>
    <property type="match status" value="1"/>
</dbReference>
<dbReference type="PANTHER" id="PTHR47268:SF4">
    <property type="entry name" value="ACYLPHOSPHATASE"/>
    <property type="match status" value="1"/>
</dbReference>
<dbReference type="Pfam" id="PF00708">
    <property type="entry name" value="Acylphosphatase"/>
    <property type="match status" value="1"/>
</dbReference>
<dbReference type="SUPFAM" id="SSF54975">
    <property type="entry name" value="Acylphosphatase/BLUF domain-like"/>
    <property type="match status" value="1"/>
</dbReference>
<dbReference type="PROSITE" id="PS00150">
    <property type="entry name" value="ACYLPHOSPHATASE_1"/>
    <property type="match status" value="1"/>
</dbReference>
<dbReference type="PROSITE" id="PS00151">
    <property type="entry name" value="ACYLPHOSPHATASE_2"/>
    <property type="match status" value="1"/>
</dbReference>
<dbReference type="PROSITE" id="PS51160">
    <property type="entry name" value="ACYLPHOSPHATASE_3"/>
    <property type="match status" value="1"/>
</dbReference>
<keyword id="KW-0378">Hydrolase</keyword>
<keyword id="KW-1185">Reference proteome</keyword>
<evidence type="ECO:0000255" key="1">
    <source>
        <dbReference type="PROSITE-ProRule" id="PRU00520"/>
    </source>
</evidence>
<evidence type="ECO:0000305" key="2"/>
<accession>P9WQC8</accession>
<accession>L0TB15</accession>
<accession>P56543</accession>
<accession>P69419</accession>
<gene>
    <name type="primary">acyP</name>
    <name type="ordered locus">MT2991</name>
</gene>
<sequence length="93" mass="10206">MSAPDVRLTAWVHGWVQGVGFRWWTRCRALELGLTGYAANHADGRVLVVAQGPRAACQKLLQLLQGDTTPGRVAKVVADWSQSTEQITGFSER</sequence>
<proteinExistence type="inferred from homology"/>
<reference key="1">
    <citation type="journal article" date="2002" name="J. Bacteriol.">
        <title>Whole-genome comparison of Mycobacterium tuberculosis clinical and laboratory strains.</title>
        <authorList>
            <person name="Fleischmann R.D."/>
            <person name="Alland D."/>
            <person name="Eisen J.A."/>
            <person name="Carpenter L."/>
            <person name="White O."/>
            <person name="Peterson J.D."/>
            <person name="DeBoy R.T."/>
            <person name="Dodson R.J."/>
            <person name="Gwinn M.L."/>
            <person name="Haft D.H."/>
            <person name="Hickey E.K."/>
            <person name="Kolonay J.F."/>
            <person name="Nelson W.C."/>
            <person name="Umayam L.A."/>
            <person name="Ermolaeva M.D."/>
            <person name="Salzberg S.L."/>
            <person name="Delcher A."/>
            <person name="Utterback T.R."/>
            <person name="Weidman J.F."/>
            <person name="Khouri H.M."/>
            <person name="Gill J."/>
            <person name="Mikula A."/>
            <person name="Bishai W."/>
            <person name="Jacobs W.R. Jr."/>
            <person name="Venter J.C."/>
            <person name="Fraser C.M."/>
        </authorList>
    </citation>
    <scope>NUCLEOTIDE SEQUENCE [LARGE SCALE GENOMIC DNA]</scope>
    <source>
        <strain>CDC 1551 / Oshkosh</strain>
    </source>
</reference>
<comment type="catalytic activity">
    <reaction>
        <text>an acyl phosphate + H2O = a carboxylate + phosphate + H(+)</text>
        <dbReference type="Rhea" id="RHEA:14965"/>
        <dbReference type="ChEBI" id="CHEBI:15377"/>
        <dbReference type="ChEBI" id="CHEBI:15378"/>
        <dbReference type="ChEBI" id="CHEBI:29067"/>
        <dbReference type="ChEBI" id="CHEBI:43474"/>
        <dbReference type="ChEBI" id="CHEBI:59918"/>
        <dbReference type="EC" id="3.6.1.7"/>
    </reaction>
</comment>
<comment type="similarity">
    <text evidence="2">Belongs to the acylphosphatase family.</text>
</comment>
<feature type="chain" id="PRO_0000426798" description="Acylphosphatase">
    <location>
        <begin position="1"/>
        <end position="93"/>
    </location>
</feature>
<feature type="domain" description="Acylphosphatase-like" evidence="1">
    <location>
        <begin position="7"/>
        <end position="93"/>
    </location>
</feature>
<feature type="active site" evidence="1">
    <location>
        <position position="22"/>
    </location>
</feature>
<feature type="active site" evidence="1">
    <location>
        <position position="40"/>
    </location>
</feature>
<organism>
    <name type="scientific">Mycobacterium tuberculosis (strain CDC 1551 / Oshkosh)</name>
    <dbReference type="NCBI Taxonomy" id="83331"/>
    <lineage>
        <taxon>Bacteria</taxon>
        <taxon>Bacillati</taxon>
        <taxon>Actinomycetota</taxon>
        <taxon>Actinomycetes</taxon>
        <taxon>Mycobacteriales</taxon>
        <taxon>Mycobacteriaceae</taxon>
        <taxon>Mycobacterium</taxon>
        <taxon>Mycobacterium tuberculosis complex</taxon>
    </lineage>
</organism>